<keyword id="KW-1003">Cell membrane</keyword>
<keyword id="KW-0903">Direct protein sequencing</keyword>
<keyword id="KW-1015">Disulfide bond</keyword>
<keyword id="KW-0325">Glycoprotein</keyword>
<keyword id="KW-0472">Membrane</keyword>
<keyword id="KW-0552">Olfaction</keyword>
<keyword id="KW-0675">Receptor</keyword>
<keyword id="KW-0716">Sensory transduction</keyword>
<keyword id="KW-0812">Transmembrane</keyword>
<keyword id="KW-1133">Transmembrane helix</keyword>
<protein>
    <recommendedName>
        <fullName>Sensory neuron membrane protein 1</fullName>
    </recommendedName>
</protein>
<sequence>MLLPKPLKYAAIGGGVFVFGILIGWVIFPVILKSQIKKEMALSKKTDLRQMWEKVPFALDFKVYIFNYTNVDEIQKGAKPIVKEIGPYYFEEWKEKVEVEDHEENDTITYKRLDVFHFRPDLSGPGLTGEEVIIMPHLFILAMVATINREKPSMLNVVEKSINGIFDNPKDVFLRVKAMDIMFRGIIINCDRTEFAPKAACTKMKKDAVTGVIYEPNNQFRFSLFGTRNNTVNPDVVTVKRGIKNIMDVGQVVALNGKPQIDIWRDHCNEFQGTDGTVFPPFLTYKDRLQSFSFDLCRSFKAWFQKKTSYKGIKTNRYIANVGDFANDPELQCFCDTPDECLPKGIMDIRKCLKVPMYVSLPHFLETDTSVTNQVKGLTPDPNEHGIIADFEPLSGTLMDAKQRMQYNIKLLRTDKIAIFKDLPDSIVPCFWVHEGILLNKTFVKMLKHQLFIPKRIVGVIRWWMVSFGLIAVLAGVMYHFKDNIMGWAAKGESTTAKVNPEDGSNEQRGVSVIGQDREPPKVTM</sequence>
<evidence type="ECO:0000250" key="1">
    <source>
        <dbReference type="UniProtKB" id="P26201"/>
    </source>
</evidence>
<evidence type="ECO:0000255" key="2"/>
<evidence type="ECO:0000256" key="3">
    <source>
        <dbReference type="SAM" id="MobiDB-lite"/>
    </source>
</evidence>
<evidence type="ECO:0000269" key="4">
    <source>
    </source>
</evidence>
<evidence type="ECO:0000269" key="5">
    <source>
    </source>
</evidence>
<evidence type="ECO:0000303" key="6">
    <source>
    </source>
</evidence>
<evidence type="ECO:0000305" key="7"/>
<evidence type="ECO:0000312" key="8">
    <source>
        <dbReference type="EMBL" id="AAC47540.1"/>
    </source>
</evidence>
<proteinExistence type="evidence at protein level"/>
<reference evidence="7 8" key="1">
    <citation type="journal article" date="1997" name="J. Biol. Chem.">
        <title>Snmp-1, a novel membrane protein of olfactory neurons of the silk moth Antheraea polyphemus with homology to the CD36 family of membrane proteins.</title>
        <authorList>
            <person name="Rogers M.E."/>
            <person name="Sun M."/>
            <person name="Lerner M.R."/>
            <person name="Vogt R.G."/>
        </authorList>
    </citation>
    <scope>NUCLEOTIDE SEQUENCE [MRNA]</scope>
    <scope>PROTEIN SEQUENCE OF 1-30</scope>
    <scope>FUNCTION</scope>
    <scope>SUBCELLULAR LOCATION</scope>
    <scope>TISSUE SPECIFICITY</scope>
    <scope>DEVELOPMENTAL STAGE</scope>
    <source>
        <tissue evidence="5">Antenna</tissue>
    </source>
</reference>
<reference evidence="7" key="2">
    <citation type="journal article" date="2001" name="Cell Tissue Res.">
        <title>Expression of SNMP-1 in olfactory neurons and sensilla of male and female antennae of the silkmoth Antheraea polyphemus.</title>
        <authorList>
            <person name="Rogers M.E."/>
            <person name="Steinbrecht R.A."/>
            <person name="Vogt R.G."/>
        </authorList>
    </citation>
    <scope>FUNCTION</scope>
    <scope>SUBCELLULAR LOCATION</scope>
    <scope>TISSUE SPECIFICITY</scope>
    <source>
        <tissue evidence="4">Antenna</tissue>
    </source>
</reference>
<dbReference type="EMBL" id="U95026">
    <property type="protein sequence ID" value="AAC47540.1"/>
    <property type="molecule type" value="mRNA"/>
</dbReference>
<dbReference type="PIR" id="A59259">
    <property type="entry name" value="A59259"/>
</dbReference>
<dbReference type="SMR" id="O02351"/>
<dbReference type="GlyCosmos" id="O02351">
    <property type="glycosylation" value="4 sites, No reported glycans"/>
</dbReference>
<dbReference type="GO" id="GO:0005737">
    <property type="term" value="C:cytoplasm"/>
    <property type="evidence" value="ECO:0007669"/>
    <property type="project" value="TreeGrafter"/>
</dbReference>
<dbReference type="GO" id="GO:0005886">
    <property type="term" value="C:plasma membrane"/>
    <property type="evidence" value="ECO:0007669"/>
    <property type="project" value="UniProtKB-SubCell"/>
</dbReference>
<dbReference type="GO" id="GO:0005044">
    <property type="term" value="F:scavenger receptor activity"/>
    <property type="evidence" value="ECO:0007669"/>
    <property type="project" value="TreeGrafter"/>
</dbReference>
<dbReference type="GO" id="GO:0007608">
    <property type="term" value="P:sensory perception of smell"/>
    <property type="evidence" value="ECO:0007669"/>
    <property type="project" value="UniProtKB-KW"/>
</dbReference>
<dbReference type="InterPro" id="IPR002159">
    <property type="entry name" value="CD36_fam"/>
</dbReference>
<dbReference type="PANTHER" id="PTHR11923">
    <property type="entry name" value="SCAVENGER RECEPTOR CLASS B TYPE-1 SR-B1"/>
    <property type="match status" value="1"/>
</dbReference>
<dbReference type="PANTHER" id="PTHR11923:SF69">
    <property type="entry name" value="SENSORY NEURON MEMBRANE PROTEIN 1"/>
    <property type="match status" value="1"/>
</dbReference>
<dbReference type="Pfam" id="PF01130">
    <property type="entry name" value="CD36"/>
    <property type="match status" value="1"/>
</dbReference>
<dbReference type="PRINTS" id="PR01609">
    <property type="entry name" value="CD36FAMILY"/>
</dbReference>
<organism>
    <name type="scientific">Antheraea polyphemus</name>
    <name type="common">Polyphemus moth</name>
    <dbReference type="NCBI Taxonomy" id="7120"/>
    <lineage>
        <taxon>Eukaryota</taxon>
        <taxon>Metazoa</taxon>
        <taxon>Ecdysozoa</taxon>
        <taxon>Arthropoda</taxon>
        <taxon>Hexapoda</taxon>
        <taxon>Insecta</taxon>
        <taxon>Pterygota</taxon>
        <taxon>Neoptera</taxon>
        <taxon>Endopterygota</taxon>
        <taxon>Lepidoptera</taxon>
        <taxon>Glossata</taxon>
        <taxon>Ditrysia</taxon>
        <taxon>Bombycoidea</taxon>
        <taxon>Saturniidae</taxon>
        <taxon>Saturniinae</taxon>
        <taxon>Saturniini</taxon>
        <taxon>Antheraea</taxon>
    </lineage>
</organism>
<name>SNMP1_ANTPO</name>
<comment type="function">
    <text evidence="4 5">Plays an olfactory role that is not restricted to pheromone sensitivity. May be involved in the odor detection properties of the olfactory receptor neurons (ORNs) rather than their differentiation and growth.</text>
</comment>
<comment type="subcellular location">
    <subcellularLocation>
        <location evidence="4 5">Cell membrane</location>
        <topology evidence="4 5">Multi-pass membrane protein</topology>
    </subcellularLocation>
    <text evidence="4 5">Localizes to structures interpreted to be vesicles and secretory granules but not in the plasma membrane of the cell body.</text>
</comment>
<comment type="tissue specificity">
    <text evidence="4 5">Principal component of the olfactory cilia membrane. Localizes to the somata, dendritic neck and cilia of the olfactory neurons (at protein level). Not detected in the axons of ORNs, the cytoplasm of auxiliary cells or non-sensory structures. Expression is universal among ORNs but differential between neuron and sensillum types.</text>
</comment>
<comment type="developmental stage">
    <text evidence="5">Detected at low levels on day 6, increases gradually to day 11 and then dramatically rises well into the adult stage.</text>
</comment>
<comment type="similarity">
    <text evidence="7">Belongs to the CD36 family.</text>
</comment>
<gene>
    <name evidence="6" type="primary">Snmp-1</name>
</gene>
<accession>O02351</accession>
<feature type="chain" id="PRO_0000408232" description="Sensory neuron membrane protein 1">
    <location>
        <begin position="1"/>
        <end position="525"/>
    </location>
</feature>
<feature type="topological domain" description="Cytoplasmic" evidence="2">
    <location>
        <begin position="1"/>
        <end position="11"/>
    </location>
</feature>
<feature type="transmembrane region" description="Helical" evidence="2">
    <location>
        <begin position="12"/>
        <end position="32"/>
    </location>
</feature>
<feature type="topological domain" description="Extracellular" evidence="2">
    <location>
        <begin position="33"/>
        <end position="456"/>
    </location>
</feature>
<feature type="transmembrane region" description="Helical" evidence="2">
    <location>
        <begin position="457"/>
        <end position="477"/>
    </location>
</feature>
<feature type="topological domain" description="Cytoplasmic" evidence="2">
    <location>
        <begin position="478"/>
        <end position="525"/>
    </location>
</feature>
<feature type="region of interest" description="Disordered" evidence="3">
    <location>
        <begin position="496"/>
        <end position="525"/>
    </location>
</feature>
<feature type="compositionally biased region" description="Basic and acidic residues" evidence="3">
    <location>
        <begin position="516"/>
        <end position="525"/>
    </location>
</feature>
<feature type="glycosylation site" description="N-linked (GlcNAc...) asparagine" evidence="2">
    <location>
        <position position="67"/>
    </location>
</feature>
<feature type="glycosylation site" description="N-linked (GlcNAc...) asparagine" evidence="2">
    <location>
        <position position="105"/>
    </location>
</feature>
<feature type="glycosylation site" description="N-linked (GlcNAc...) asparagine" evidence="2">
    <location>
        <position position="229"/>
    </location>
</feature>
<feature type="glycosylation site" description="N-linked (GlcNAc...) asparagine" evidence="2">
    <location>
        <position position="440"/>
    </location>
</feature>
<feature type="disulfide bond" evidence="1">
    <location>
        <begin position="268"/>
        <end position="333"/>
    </location>
</feature>
<feature type="disulfide bond" evidence="1">
    <location>
        <begin position="297"/>
        <end position="352"/>
    </location>
</feature>
<feature type="disulfide bond" evidence="1">
    <location>
        <begin position="335"/>
        <end position="341"/>
    </location>
</feature>